<name>FUR_PSEPU</name>
<comment type="function">
    <text>Fur acts as a repressor, employing Fe(2+) as a cofactor to bind the operator of the iron transport operon. Involved in the siderophore pyoverdine (pseudobactin) 358 biosynthesis regulation.</text>
</comment>
<comment type="subunit">
    <text evidence="1">Homodimer.</text>
</comment>
<comment type="subcellular location">
    <subcellularLocation>
        <location evidence="1">Cytoplasm</location>
    </subcellularLocation>
</comment>
<comment type="similarity">
    <text evidence="2">Belongs to the Fur family.</text>
</comment>
<accession>Q52083</accession>
<keyword id="KW-0963">Cytoplasm</keyword>
<keyword id="KW-0238">DNA-binding</keyword>
<keyword id="KW-0408">Iron</keyword>
<keyword id="KW-0479">Metal-binding</keyword>
<keyword id="KW-0678">Repressor</keyword>
<keyword id="KW-0804">Transcription</keyword>
<keyword id="KW-0805">Transcription regulation</keyword>
<keyword id="KW-0862">Zinc</keyword>
<feature type="chain" id="PRO_0000095569" description="Ferric uptake regulation protein">
    <location>
        <begin position="1"/>
        <end position="134"/>
    </location>
</feature>
<feature type="region of interest" description="DNA-binding" evidence="1">
    <location>
        <begin position="1"/>
        <end position="83"/>
    </location>
</feature>
<feature type="region of interest" description="Dimerization" evidence="1">
    <location>
        <begin position="84"/>
        <end position="134"/>
    </location>
</feature>
<feature type="binding site" evidence="1">
    <location>
        <position position="32"/>
    </location>
    <ligand>
        <name>Zn(2+)</name>
        <dbReference type="ChEBI" id="CHEBI:29105"/>
    </ligand>
</feature>
<feature type="binding site" evidence="1">
    <location>
        <position position="80"/>
    </location>
    <ligand>
        <name>Zn(2+)</name>
        <dbReference type="ChEBI" id="CHEBI:29105"/>
    </ligand>
</feature>
<feature type="binding site" evidence="1">
    <location>
        <position position="86"/>
    </location>
    <ligand>
        <name>Fe cation</name>
        <dbReference type="ChEBI" id="CHEBI:24875"/>
    </ligand>
</feature>
<feature type="binding site" evidence="1">
    <location>
        <position position="88"/>
    </location>
    <ligand>
        <name>Fe cation</name>
        <dbReference type="ChEBI" id="CHEBI:24875"/>
    </ligand>
</feature>
<feature type="binding site" evidence="1">
    <location>
        <position position="89"/>
    </location>
    <ligand>
        <name>Zn(2+)</name>
        <dbReference type="ChEBI" id="CHEBI:29105"/>
    </ligand>
</feature>
<feature type="binding site" evidence="1">
    <location>
        <position position="100"/>
    </location>
    <ligand>
        <name>Zn(2+)</name>
        <dbReference type="ChEBI" id="CHEBI:29105"/>
    </ligand>
</feature>
<feature type="binding site" evidence="1">
    <location>
        <position position="107"/>
    </location>
    <ligand>
        <name>Fe cation</name>
        <dbReference type="ChEBI" id="CHEBI:24875"/>
    </ligand>
</feature>
<feature type="binding site" evidence="1">
    <location>
        <position position="124"/>
    </location>
    <ligand>
        <name>Fe cation</name>
        <dbReference type="ChEBI" id="CHEBI:24875"/>
    </ligand>
</feature>
<proteinExistence type="inferred from homology"/>
<organism>
    <name type="scientific">Pseudomonas putida</name>
    <name type="common">Arthrobacter siderocapsulatus</name>
    <dbReference type="NCBI Taxonomy" id="303"/>
    <lineage>
        <taxon>Bacteria</taxon>
        <taxon>Pseudomonadati</taxon>
        <taxon>Pseudomonadota</taxon>
        <taxon>Gammaproteobacteria</taxon>
        <taxon>Pseudomonadales</taxon>
        <taxon>Pseudomonadaceae</taxon>
        <taxon>Pseudomonas</taxon>
    </lineage>
</organism>
<protein>
    <recommendedName>
        <fullName>Ferric uptake regulation protein</fullName>
        <shortName>Ferric uptake regulator</shortName>
    </recommendedName>
</protein>
<sequence>MVENSELRKAGLKVTLPRVKILQMLDSTEQRHMSAEECIKALMEAGEDVGLATVYRVLTQFEAAGLVVRHNFDGGHAVFELADGGHHDHMVNVETSEVIEFMDAEIEKRQREIVAEHGFELVDHNLVLYVRKKK</sequence>
<dbReference type="EMBL" id="X82037">
    <property type="protein sequence ID" value="CAA57557.1"/>
    <property type="molecule type" value="Genomic_DNA"/>
</dbReference>
<dbReference type="PIR" id="S61844">
    <property type="entry name" value="S61844"/>
</dbReference>
<dbReference type="SMR" id="Q52083"/>
<dbReference type="eggNOG" id="COG0735">
    <property type="taxonomic scope" value="Bacteria"/>
</dbReference>
<dbReference type="GO" id="GO:0005829">
    <property type="term" value="C:cytosol"/>
    <property type="evidence" value="ECO:0007669"/>
    <property type="project" value="TreeGrafter"/>
</dbReference>
<dbReference type="GO" id="GO:0003700">
    <property type="term" value="F:DNA-binding transcription factor activity"/>
    <property type="evidence" value="ECO:0007669"/>
    <property type="project" value="InterPro"/>
</dbReference>
<dbReference type="GO" id="GO:0000976">
    <property type="term" value="F:transcription cis-regulatory region binding"/>
    <property type="evidence" value="ECO:0007669"/>
    <property type="project" value="TreeGrafter"/>
</dbReference>
<dbReference type="GO" id="GO:0008270">
    <property type="term" value="F:zinc ion binding"/>
    <property type="evidence" value="ECO:0007669"/>
    <property type="project" value="TreeGrafter"/>
</dbReference>
<dbReference type="GO" id="GO:0045892">
    <property type="term" value="P:negative regulation of DNA-templated transcription"/>
    <property type="evidence" value="ECO:0007669"/>
    <property type="project" value="TreeGrafter"/>
</dbReference>
<dbReference type="GO" id="GO:1900705">
    <property type="term" value="P:negative regulation of siderophore biosynthetic process"/>
    <property type="evidence" value="ECO:0007669"/>
    <property type="project" value="TreeGrafter"/>
</dbReference>
<dbReference type="CDD" id="cd07153">
    <property type="entry name" value="Fur_like"/>
    <property type="match status" value="1"/>
</dbReference>
<dbReference type="FunFam" id="1.10.10.10:FF:000007">
    <property type="entry name" value="Ferric uptake regulation protein"/>
    <property type="match status" value="1"/>
</dbReference>
<dbReference type="FunFam" id="3.30.1490.190:FF:000001">
    <property type="entry name" value="Ferric uptake regulation protein"/>
    <property type="match status" value="1"/>
</dbReference>
<dbReference type="Gene3D" id="3.30.1490.190">
    <property type="match status" value="1"/>
</dbReference>
<dbReference type="Gene3D" id="1.10.10.10">
    <property type="entry name" value="Winged helix-like DNA-binding domain superfamily/Winged helix DNA-binding domain"/>
    <property type="match status" value="1"/>
</dbReference>
<dbReference type="InterPro" id="IPR002481">
    <property type="entry name" value="FUR"/>
</dbReference>
<dbReference type="InterPro" id="IPR043135">
    <property type="entry name" value="Fur_C"/>
</dbReference>
<dbReference type="InterPro" id="IPR036388">
    <property type="entry name" value="WH-like_DNA-bd_sf"/>
</dbReference>
<dbReference type="InterPro" id="IPR036390">
    <property type="entry name" value="WH_DNA-bd_sf"/>
</dbReference>
<dbReference type="NCBIfam" id="NF006999">
    <property type="entry name" value="PRK09462.1"/>
    <property type="match status" value="1"/>
</dbReference>
<dbReference type="PANTHER" id="PTHR33202:SF2">
    <property type="entry name" value="FERRIC UPTAKE REGULATION PROTEIN"/>
    <property type="match status" value="1"/>
</dbReference>
<dbReference type="PANTHER" id="PTHR33202">
    <property type="entry name" value="ZINC UPTAKE REGULATION PROTEIN"/>
    <property type="match status" value="1"/>
</dbReference>
<dbReference type="Pfam" id="PF01475">
    <property type="entry name" value="FUR"/>
    <property type="match status" value="1"/>
</dbReference>
<dbReference type="SUPFAM" id="SSF46785">
    <property type="entry name" value="Winged helix' DNA-binding domain"/>
    <property type="match status" value="1"/>
</dbReference>
<reference key="1">
    <citation type="journal article" date="1995" name="Mol. Microbiol.">
        <title>Iron regulation of siderophore biosynthesis and transport in Pseudomonas putida WCS358: involvement of a transcriptional activator and of the Fur protein.</title>
        <authorList>
            <person name="Venturi V."/>
            <person name="Ottevanger C."/>
            <person name="Bracke M."/>
            <person name="Weisbeek P.J."/>
        </authorList>
    </citation>
    <scope>NUCLEOTIDE SEQUENCE [GENOMIC DNA]</scope>
    <source>
        <strain>WCS358</strain>
    </source>
</reference>
<evidence type="ECO:0000250" key="1"/>
<evidence type="ECO:0000305" key="2"/>
<gene>
    <name type="primary">fur</name>
</gene>